<proteinExistence type="inferred from homology"/>
<accession>A7TN63</accession>
<protein>
    <recommendedName>
        <fullName>Required for respiratory growth protein 1, mitochondrial</fullName>
    </recommendedName>
</protein>
<reference key="1">
    <citation type="journal article" date="2007" name="Proc. Natl. Acad. Sci. U.S.A.">
        <title>Independent sorting-out of thousands of duplicated gene pairs in two yeast species descended from a whole-genome duplication.</title>
        <authorList>
            <person name="Scannell D.R."/>
            <person name="Frank A.C."/>
            <person name="Conant G.C."/>
            <person name="Byrne K.P."/>
            <person name="Woolfit M."/>
            <person name="Wolfe K.H."/>
        </authorList>
    </citation>
    <scope>NUCLEOTIDE SEQUENCE [LARGE SCALE GENOMIC DNA]</scope>
    <source>
        <strain>ATCC 22028 / DSM 70294 / BCRC 21397 / CBS 2163 / NBRC 10782 / NRRL Y-8283 / UCD 57-17</strain>
    </source>
</reference>
<keyword id="KW-0496">Mitochondrion</keyword>
<keyword id="KW-1185">Reference proteome</keyword>
<evidence type="ECO:0000250" key="1"/>
<evidence type="ECO:0000305" key="2"/>
<sequence length="382" mass="45079">MTSHFSSLPAHRSYIFSLYRDVLRNIHRCCYSVELQNILTSKLNLTMKQQKGTMSSWKAHSKIKELEELNDRLINRDLPYLKELINNLSGNKINSTQPNQYVQDLKEATNLINEYHSNNSQSIETIKKMDILNRYIKTKQSKHLLPKEISNVYKESLLLPFAIHEDSIYKLNKLHNQLIRGPPRVRLTNTKAGKITIWFLRSALNKKDRQSKKLKLRIAKEKQKHQQRIDNIKTCEKYAYWALLEASWESLLNTGKLPTININKTINNLSTLDNEDININRKNNHHIKDIHVKEWIEPITYSIKQLVDKEFERKCHYENYKKIILYGKNNGLIDFFENKTKVMYARRVSRYKTVVNGLPFIIPTIPRRDLRTALLDNKVLLP</sequence>
<feature type="chain" id="PRO_0000402253" description="Required for respiratory growth protein 1, mitochondrial">
    <location>
        <begin position="1"/>
        <end position="382"/>
    </location>
</feature>
<organism>
    <name type="scientific">Vanderwaltozyma polyspora (strain ATCC 22028 / DSM 70294 / BCRC 21397 / CBS 2163 / NBRC 10782 / NRRL Y-8283 / UCD 57-17)</name>
    <name type="common">Kluyveromyces polysporus</name>
    <dbReference type="NCBI Taxonomy" id="436907"/>
    <lineage>
        <taxon>Eukaryota</taxon>
        <taxon>Fungi</taxon>
        <taxon>Dikarya</taxon>
        <taxon>Ascomycota</taxon>
        <taxon>Saccharomycotina</taxon>
        <taxon>Saccharomycetes</taxon>
        <taxon>Saccharomycetales</taxon>
        <taxon>Saccharomycetaceae</taxon>
        <taxon>Vanderwaltozyma</taxon>
    </lineage>
</organism>
<gene>
    <name type="primary">RRG1</name>
    <name type="ORF">Kpol_1053p18</name>
</gene>
<dbReference type="EMBL" id="DS480428">
    <property type="protein sequence ID" value="EDO16281.1"/>
    <property type="molecule type" value="Genomic_DNA"/>
</dbReference>
<dbReference type="RefSeq" id="XP_001644139.1">
    <property type="nucleotide sequence ID" value="XM_001644089.1"/>
</dbReference>
<dbReference type="SMR" id="A7TN63"/>
<dbReference type="FunCoup" id="A7TN63">
    <property type="interactions" value="40"/>
</dbReference>
<dbReference type="GeneID" id="5544410"/>
<dbReference type="KEGG" id="vpo:Kpol_1053p18"/>
<dbReference type="eggNOG" id="ENOG502RYGE">
    <property type="taxonomic scope" value="Eukaryota"/>
</dbReference>
<dbReference type="HOGENOM" id="CLU_062256_0_0_1"/>
<dbReference type="InParanoid" id="A7TN63"/>
<dbReference type="OMA" id="RIWFIRS"/>
<dbReference type="OrthoDB" id="4065996at2759"/>
<dbReference type="PhylomeDB" id="A7TN63"/>
<dbReference type="Proteomes" id="UP000000267">
    <property type="component" value="Unassembled WGS sequence"/>
</dbReference>
<dbReference type="GO" id="GO:0099617">
    <property type="term" value="C:matrix side of mitochondrial inner membrane"/>
    <property type="evidence" value="ECO:0007669"/>
    <property type="project" value="EnsemblFungi"/>
</dbReference>
<dbReference type="GO" id="GO:0000002">
    <property type="term" value="P:mitochondrial genome maintenance"/>
    <property type="evidence" value="ECO:0007669"/>
    <property type="project" value="EnsemblFungi"/>
</dbReference>
<dbReference type="GO" id="GO:0097745">
    <property type="term" value="P:mitochondrial tRNA 5'-end processing"/>
    <property type="evidence" value="ECO:0007669"/>
    <property type="project" value="EnsemblFungi"/>
</dbReference>
<dbReference type="GO" id="GO:0007035">
    <property type="term" value="P:vacuolar acidification"/>
    <property type="evidence" value="ECO:0007669"/>
    <property type="project" value="EnsemblFungi"/>
</dbReference>
<name>RRG1_VANPO</name>
<comment type="function">
    <text evidence="1">Essential for respiratory growth and required for mitochondrial protein synthesis. Required for vacuolar acidification (By similarity).</text>
</comment>
<comment type="subcellular location">
    <subcellularLocation>
        <location evidence="1">Mitochondrion</location>
    </subcellularLocation>
</comment>
<comment type="similarity">
    <text evidence="2">Belongs to the RRG1 family.</text>
</comment>